<proteinExistence type="inferred from homology"/>
<keyword id="KW-0997">Cell inner membrane</keyword>
<keyword id="KW-1003">Cell membrane</keyword>
<keyword id="KW-0406">Ion transport</keyword>
<keyword id="KW-0472">Membrane</keyword>
<keyword id="KW-0630">Potassium</keyword>
<keyword id="KW-0633">Potassium transport</keyword>
<keyword id="KW-0769">Symport</keyword>
<keyword id="KW-0812">Transmembrane</keyword>
<keyword id="KW-1133">Transmembrane helix</keyword>
<keyword id="KW-0813">Transport</keyword>
<gene>
    <name evidence="1" type="primary">kup</name>
    <name type="ordered locus">SeHA_C4213</name>
</gene>
<dbReference type="EMBL" id="CP001120">
    <property type="protein sequence ID" value="ACF70319.1"/>
    <property type="molecule type" value="Genomic_DNA"/>
</dbReference>
<dbReference type="RefSeq" id="WP_000102338.1">
    <property type="nucleotide sequence ID" value="NC_011083.1"/>
</dbReference>
<dbReference type="KEGG" id="seh:SeHA_C4213"/>
<dbReference type="HOGENOM" id="CLU_008142_4_2_6"/>
<dbReference type="Proteomes" id="UP000001866">
    <property type="component" value="Chromosome"/>
</dbReference>
<dbReference type="GO" id="GO:0005886">
    <property type="term" value="C:plasma membrane"/>
    <property type="evidence" value="ECO:0007669"/>
    <property type="project" value="UniProtKB-SubCell"/>
</dbReference>
<dbReference type="GO" id="GO:0015079">
    <property type="term" value="F:potassium ion transmembrane transporter activity"/>
    <property type="evidence" value="ECO:0007669"/>
    <property type="project" value="UniProtKB-UniRule"/>
</dbReference>
<dbReference type="GO" id="GO:0015293">
    <property type="term" value="F:symporter activity"/>
    <property type="evidence" value="ECO:0007669"/>
    <property type="project" value="UniProtKB-UniRule"/>
</dbReference>
<dbReference type="HAMAP" id="MF_01522">
    <property type="entry name" value="Kup"/>
    <property type="match status" value="1"/>
</dbReference>
<dbReference type="InterPro" id="IPR003855">
    <property type="entry name" value="K+_transporter"/>
</dbReference>
<dbReference type="InterPro" id="IPR053952">
    <property type="entry name" value="K_trans_C"/>
</dbReference>
<dbReference type="InterPro" id="IPR053951">
    <property type="entry name" value="K_trans_N"/>
</dbReference>
<dbReference type="InterPro" id="IPR023051">
    <property type="entry name" value="Kup"/>
</dbReference>
<dbReference type="NCBIfam" id="TIGR00794">
    <property type="entry name" value="kup"/>
    <property type="match status" value="1"/>
</dbReference>
<dbReference type="NCBIfam" id="NF008015">
    <property type="entry name" value="PRK10745.1"/>
    <property type="match status" value="1"/>
</dbReference>
<dbReference type="PANTHER" id="PTHR30540:SF79">
    <property type="entry name" value="LOW AFFINITY POTASSIUM TRANSPORT SYSTEM PROTEIN KUP"/>
    <property type="match status" value="1"/>
</dbReference>
<dbReference type="PANTHER" id="PTHR30540">
    <property type="entry name" value="OSMOTIC STRESS POTASSIUM TRANSPORTER"/>
    <property type="match status" value="1"/>
</dbReference>
<dbReference type="Pfam" id="PF02705">
    <property type="entry name" value="K_trans"/>
    <property type="match status" value="1"/>
</dbReference>
<dbReference type="Pfam" id="PF22776">
    <property type="entry name" value="K_trans_C"/>
    <property type="match status" value="1"/>
</dbReference>
<reference key="1">
    <citation type="journal article" date="2011" name="J. Bacteriol.">
        <title>Comparative genomics of 28 Salmonella enterica isolates: evidence for CRISPR-mediated adaptive sublineage evolution.</title>
        <authorList>
            <person name="Fricke W.F."/>
            <person name="Mammel M.K."/>
            <person name="McDermott P.F."/>
            <person name="Tartera C."/>
            <person name="White D.G."/>
            <person name="Leclerc J.E."/>
            <person name="Ravel J."/>
            <person name="Cebula T.A."/>
        </authorList>
    </citation>
    <scope>NUCLEOTIDE SEQUENCE [LARGE SCALE GENOMIC DNA]</scope>
    <source>
        <strain>SL476</strain>
    </source>
</reference>
<evidence type="ECO:0000255" key="1">
    <source>
        <dbReference type="HAMAP-Rule" id="MF_01522"/>
    </source>
</evidence>
<protein>
    <recommendedName>
        <fullName evidence="1">Low affinity potassium transport system protein Kup</fullName>
    </recommendedName>
    <alternativeName>
        <fullName evidence="1">Kup system potassium uptake protein</fullName>
    </alternativeName>
</protein>
<name>KUP_SALHS</name>
<comment type="function">
    <text evidence="1">Responsible for the low-affinity transport of potassium into the cell. Likely operates as a K(+):H(+) symporter.</text>
</comment>
<comment type="catalytic activity">
    <reaction evidence="1">
        <text>K(+)(in) + H(+)(in) = K(+)(out) + H(+)(out)</text>
        <dbReference type="Rhea" id="RHEA:28490"/>
        <dbReference type="ChEBI" id="CHEBI:15378"/>
        <dbReference type="ChEBI" id="CHEBI:29103"/>
    </reaction>
    <physiologicalReaction direction="right-to-left" evidence="1">
        <dbReference type="Rhea" id="RHEA:28492"/>
    </physiologicalReaction>
</comment>
<comment type="subcellular location">
    <subcellularLocation>
        <location evidence="1">Cell inner membrane</location>
        <topology evidence="1">Multi-pass membrane protein</topology>
    </subcellularLocation>
</comment>
<comment type="similarity">
    <text evidence="1">Belongs to the HAK/KUP transporter (TC 2.A.72) family.</text>
</comment>
<feature type="chain" id="PRO_1000190280" description="Low affinity potassium transport system protein Kup">
    <location>
        <begin position="1"/>
        <end position="622"/>
    </location>
</feature>
<feature type="transmembrane region" description="Helical" evidence="1">
    <location>
        <begin position="9"/>
        <end position="29"/>
    </location>
</feature>
<feature type="transmembrane region" description="Helical" evidence="1">
    <location>
        <begin position="49"/>
        <end position="69"/>
    </location>
</feature>
<feature type="transmembrane region" description="Helical" evidence="1">
    <location>
        <begin position="103"/>
        <end position="123"/>
    </location>
</feature>
<feature type="transmembrane region" description="Helical" evidence="1">
    <location>
        <begin position="137"/>
        <end position="157"/>
    </location>
</feature>
<feature type="transmembrane region" description="Helical" evidence="1">
    <location>
        <begin position="165"/>
        <end position="185"/>
    </location>
</feature>
<feature type="transmembrane region" description="Helical" evidence="1">
    <location>
        <begin position="213"/>
        <end position="233"/>
    </location>
</feature>
<feature type="transmembrane region" description="Helical" evidence="1">
    <location>
        <begin position="247"/>
        <end position="267"/>
    </location>
</feature>
<feature type="transmembrane region" description="Helical" evidence="1">
    <location>
        <begin position="276"/>
        <end position="296"/>
    </location>
</feature>
<feature type="transmembrane region" description="Helical" evidence="1">
    <location>
        <begin position="337"/>
        <end position="357"/>
    </location>
</feature>
<feature type="transmembrane region" description="Helical" evidence="1">
    <location>
        <begin position="363"/>
        <end position="383"/>
    </location>
</feature>
<feature type="transmembrane region" description="Helical" evidence="1">
    <location>
        <begin position="396"/>
        <end position="416"/>
    </location>
</feature>
<feature type="transmembrane region" description="Helical" evidence="1">
    <location>
        <begin position="419"/>
        <end position="439"/>
    </location>
</feature>
<accession>B4TAY9</accession>
<sequence length="622" mass="69301">MSTDNKQSLPAITLAAIGVVYGDIGTSPLYTLRECLSGQFGFGVERDAVFGFLSLIFWLLIFVVSIKYLTFVMRADNAGEGGILTLMSLAGRNTSARTTSMLVIMGLIGGSFFYGEVVITPAISVMSAIEGLEIVAPQLDTWIVPLSIIVLTLLFMIQKHGTGMVGKLFAPIMLTWFLILAVLGLRSIIANPEVLHALNPVWAVRFFLEYKTVSFIALGAVVLSITGVEALYADMGHFGKFPIRLAWFTVVLPSLVLNYFGQGALLLKHPEAIKNPFFLLAPDWALIPLLILAALATVIASQAVISGVFSLTRQAVRLGYLSPMRIIHTSEMESGQIYIPFVNWLLYFAVVVVIVSFEHSSNLAAAYGIAVTGTMVLTSILSTTVARKNWHWNKYFVALILIAFLCVDIPLFSANLDKLLSGGWLPLSLGLIMFTIMTTWKSERFRLLRRMHEHGNSLEAMIASLEKSPPVRVPGTAVYMSRALSVIPFALLHNLKHNKVLHERVILLTLRTEDAPYVHNVRRVQIEQLSPTFWRVVASYGWRETPNVEEVFHRCGLEGLSCRMMETSFFMSHESLIVGKRPWYLRLRGKLYLLLQRNALRAPDQFEIPPNRVIELGTQVEI</sequence>
<organism>
    <name type="scientific">Salmonella heidelberg (strain SL476)</name>
    <dbReference type="NCBI Taxonomy" id="454169"/>
    <lineage>
        <taxon>Bacteria</taxon>
        <taxon>Pseudomonadati</taxon>
        <taxon>Pseudomonadota</taxon>
        <taxon>Gammaproteobacteria</taxon>
        <taxon>Enterobacterales</taxon>
        <taxon>Enterobacteriaceae</taxon>
        <taxon>Salmonella</taxon>
    </lineage>
</organism>